<dbReference type="EMBL" id="CP000769">
    <property type="protein sequence ID" value="ABS26133.1"/>
    <property type="molecule type" value="Genomic_DNA"/>
</dbReference>
<dbReference type="RefSeq" id="WP_012096712.1">
    <property type="nucleotide sequence ID" value="NC_009675.1"/>
</dbReference>
<dbReference type="SMR" id="A7HBN7"/>
<dbReference type="STRING" id="404589.Anae109_1930"/>
<dbReference type="KEGG" id="afw:Anae109_1930"/>
<dbReference type="eggNOG" id="COG0200">
    <property type="taxonomic scope" value="Bacteria"/>
</dbReference>
<dbReference type="HOGENOM" id="CLU_055188_4_2_7"/>
<dbReference type="OrthoDB" id="9810293at2"/>
<dbReference type="Proteomes" id="UP000006382">
    <property type="component" value="Chromosome"/>
</dbReference>
<dbReference type="GO" id="GO:0022625">
    <property type="term" value="C:cytosolic large ribosomal subunit"/>
    <property type="evidence" value="ECO:0007669"/>
    <property type="project" value="TreeGrafter"/>
</dbReference>
<dbReference type="GO" id="GO:0019843">
    <property type="term" value="F:rRNA binding"/>
    <property type="evidence" value="ECO:0007669"/>
    <property type="project" value="UniProtKB-UniRule"/>
</dbReference>
<dbReference type="GO" id="GO:0003735">
    <property type="term" value="F:structural constituent of ribosome"/>
    <property type="evidence" value="ECO:0007669"/>
    <property type="project" value="InterPro"/>
</dbReference>
<dbReference type="GO" id="GO:0006412">
    <property type="term" value="P:translation"/>
    <property type="evidence" value="ECO:0007669"/>
    <property type="project" value="UniProtKB-UniRule"/>
</dbReference>
<dbReference type="Gene3D" id="3.100.10.10">
    <property type="match status" value="1"/>
</dbReference>
<dbReference type="HAMAP" id="MF_01341">
    <property type="entry name" value="Ribosomal_uL15"/>
    <property type="match status" value="1"/>
</dbReference>
<dbReference type="InterPro" id="IPR030878">
    <property type="entry name" value="Ribosomal_uL15"/>
</dbReference>
<dbReference type="InterPro" id="IPR021131">
    <property type="entry name" value="Ribosomal_uL15/eL18"/>
</dbReference>
<dbReference type="InterPro" id="IPR036227">
    <property type="entry name" value="Ribosomal_uL15/eL18_sf"/>
</dbReference>
<dbReference type="InterPro" id="IPR005749">
    <property type="entry name" value="Ribosomal_uL15_bac-type"/>
</dbReference>
<dbReference type="NCBIfam" id="TIGR01071">
    <property type="entry name" value="rplO_bact"/>
    <property type="match status" value="1"/>
</dbReference>
<dbReference type="PANTHER" id="PTHR12934">
    <property type="entry name" value="50S RIBOSOMAL PROTEIN L15"/>
    <property type="match status" value="1"/>
</dbReference>
<dbReference type="PANTHER" id="PTHR12934:SF11">
    <property type="entry name" value="LARGE RIBOSOMAL SUBUNIT PROTEIN UL15M"/>
    <property type="match status" value="1"/>
</dbReference>
<dbReference type="Pfam" id="PF00828">
    <property type="entry name" value="Ribosomal_L27A"/>
    <property type="match status" value="1"/>
</dbReference>
<dbReference type="SUPFAM" id="SSF52080">
    <property type="entry name" value="Ribosomal proteins L15p and L18e"/>
    <property type="match status" value="1"/>
</dbReference>
<comment type="function">
    <text evidence="1">Binds to the 23S rRNA.</text>
</comment>
<comment type="subunit">
    <text evidence="1">Part of the 50S ribosomal subunit.</text>
</comment>
<comment type="similarity">
    <text evidence="1">Belongs to the universal ribosomal protein uL15 family.</text>
</comment>
<organism>
    <name type="scientific">Anaeromyxobacter sp. (strain Fw109-5)</name>
    <dbReference type="NCBI Taxonomy" id="404589"/>
    <lineage>
        <taxon>Bacteria</taxon>
        <taxon>Pseudomonadati</taxon>
        <taxon>Myxococcota</taxon>
        <taxon>Myxococcia</taxon>
        <taxon>Myxococcales</taxon>
        <taxon>Cystobacterineae</taxon>
        <taxon>Anaeromyxobacteraceae</taxon>
        <taxon>Anaeromyxobacter</taxon>
    </lineage>
</organism>
<evidence type="ECO:0000255" key="1">
    <source>
        <dbReference type="HAMAP-Rule" id="MF_01341"/>
    </source>
</evidence>
<evidence type="ECO:0000256" key="2">
    <source>
        <dbReference type="SAM" id="MobiDB-lite"/>
    </source>
</evidence>
<evidence type="ECO:0000305" key="3"/>
<feature type="chain" id="PRO_1000054423" description="Large ribosomal subunit protein uL15">
    <location>
        <begin position="1"/>
        <end position="164"/>
    </location>
</feature>
<feature type="region of interest" description="Disordered" evidence="2">
    <location>
        <begin position="1"/>
        <end position="52"/>
    </location>
</feature>
<feature type="compositionally biased region" description="Gly residues" evidence="2">
    <location>
        <begin position="21"/>
        <end position="37"/>
    </location>
</feature>
<name>RL15_ANADF</name>
<proteinExistence type="inferred from homology"/>
<gene>
    <name evidence="1" type="primary">rplO</name>
    <name type="ordered locus">Anae109_1930</name>
</gene>
<sequence>MSLSKLKAPKGANRERTRVGRGQGSGLGKTAGRGGKGQKARSGNMHFEGFEGGQMPLQRRLPKFGFKNVFRREFEEVKVGDLDGLSGVVDPAALKGAGLVRGNRDGVVVLGGGELKSAVTVKVHRVTAGARAAIEKAGGTVELIPAPVTMYEKAKAARKAQAKK</sequence>
<keyword id="KW-1185">Reference proteome</keyword>
<keyword id="KW-0687">Ribonucleoprotein</keyword>
<keyword id="KW-0689">Ribosomal protein</keyword>
<keyword id="KW-0694">RNA-binding</keyword>
<keyword id="KW-0699">rRNA-binding</keyword>
<reference key="1">
    <citation type="journal article" date="2015" name="Genome Announc.">
        <title>Complete genome sequence of Anaeromyxobacter sp. Fw109-5, an anaerobic, metal-reducing bacterium isolated from a contaminated subsurface environment.</title>
        <authorList>
            <person name="Hwang C."/>
            <person name="Copeland A."/>
            <person name="Lucas S."/>
            <person name="Lapidus A."/>
            <person name="Barry K."/>
            <person name="Glavina Del Rio T."/>
            <person name="Dalin E."/>
            <person name="Tice H."/>
            <person name="Pitluck S."/>
            <person name="Sims D."/>
            <person name="Brettin T."/>
            <person name="Bruce D.C."/>
            <person name="Detter J.C."/>
            <person name="Han C.S."/>
            <person name="Schmutz J."/>
            <person name="Larimer F.W."/>
            <person name="Land M.L."/>
            <person name="Hauser L.J."/>
            <person name="Kyrpides N."/>
            <person name="Lykidis A."/>
            <person name="Richardson P."/>
            <person name="Belieav A."/>
            <person name="Sanford R.A."/>
            <person name="Loeffler F.E."/>
            <person name="Fields M.W."/>
        </authorList>
    </citation>
    <scope>NUCLEOTIDE SEQUENCE [LARGE SCALE GENOMIC DNA]</scope>
    <source>
        <strain>Fw109-5</strain>
    </source>
</reference>
<protein>
    <recommendedName>
        <fullName evidence="1">Large ribosomal subunit protein uL15</fullName>
    </recommendedName>
    <alternativeName>
        <fullName evidence="3">50S ribosomal protein L15</fullName>
    </alternativeName>
</protein>
<accession>A7HBN7</accession>